<dbReference type="EC" id="2.4.2.9" evidence="1"/>
<dbReference type="EMBL" id="AP009152">
    <property type="protein sequence ID" value="BAG28668.1"/>
    <property type="molecule type" value="Genomic_DNA"/>
</dbReference>
<dbReference type="RefSeq" id="WP_012397395.1">
    <property type="nucleotide sequence ID" value="NC_010617.1"/>
</dbReference>
<dbReference type="SMR" id="B2GFU4"/>
<dbReference type="STRING" id="378753.KRH_03210"/>
<dbReference type="KEGG" id="krh:KRH_03210"/>
<dbReference type="eggNOG" id="COG0035">
    <property type="taxonomic scope" value="Bacteria"/>
</dbReference>
<dbReference type="HOGENOM" id="CLU_067096_2_3_11"/>
<dbReference type="OrthoDB" id="9781675at2"/>
<dbReference type="UniPathway" id="UPA00574">
    <property type="reaction ID" value="UER00636"/>
</dbReference>
<dbReference type="Proteomes" id="UP000008838">
    <property type="component" value="Chromosome"/>
</dbReference>
<dbReference type="GO" id="GO:0005525">
    <property type="term" value="F:GTP binding"/>
    <property type="evidence" value="ECO:0007669"/>
    <property type="project" value="UniProtKB-KW"/>
</dbReference>
<dbReference type="GO" id="GO:0000287">
    <property type="term" value="F:magnesium ion binding"/>
    <property type="evidence" value="ECO:0007669"/>
    <property type="project" value="UniProtKB-UniRule"/>
</dbReference>
<dbReference type="GO" id="GO:0004845">
    <property type="term" value="F:uracil phosphoribosyltransferase activity"/>
    <property type="evidence" value="ECO:0007669"/>
    <property type="project" value="UniProtKB-UniRule"/>
</dbReference>
<dbReference type="GO" id="GO:0044206">
    <property type="term" value="P:UMP salvage"/>
    <property type="evidence" value="ECO:0007669"/>
    <property type="project" value="UniProtKB-UniRule"/>
</dbReference>
<dbReference type="GO" id="GO:0006223">
    <property type="term" value="P:uracil salvage"/>
    <property type="evidence" value="ECO:0007669"/>
    <property type="project" value="InterPro"/>
</dbReference>
<dbReference type="CDD" id="cd06223">
    <property type="entry name" value="PRTases_typeI"/>
    <property type="match status" value="1"/>
</dbReference>
<dbReference type="FunFam" id="3.40.50.2020:FF:000003">
    <property type="entry name" value="Uracil phosphoribosyltransferase"/>
    <property type="match status" value="1"/>
</dbReference>
<dbReference type="Gene3D" id="3.40.50.2020">
    <property type="match status" value="1"/>
</dbReference>
<dbReference type="HAMAP" id="MF_01218_B">
    <property type="entry name" value="Upp_B"/>
    <property type="match status" value="1"/>
</dbReference>
<dbReference type="InterPro" id="IPR000836">
    <property type="entry name" value="PRibTrfase_dom"/>
</dbReference>
<dbReference type="InterPro" id="IPR029057">
    <property type="entry name" value="PRTase-like"/>
</dbReference>
<dbReference type="InterPro" id="IPR034332">
    <property type="entry name" value="Upp_B"/>
</dbReference>
<dbReference type="InterPro" id="IPR050054">
    <property type="entry name" value="UPRTase/APRTase"/>
</dbReference>
<dbReference type="InterPro" id="IPR005765">
    <property type="entry name" value="Ura_phspho_trans"/>
</dbReference>
<dbReference type="NCBIfam" id="NF001097">
    <property type="entry name" value="PRK00129.1"/>
    <property type="match status" value="1"/>
</dbReference>
<dbReference type="NCBIfam" id="TIGR01091">
    <property type="entry name" value="upp"/>
    <property type="match status" value="1"/>
</dbReference>
<dbReference type="PANTHER" id="PTHR32315">
    <property type="entry name" value="ADENINE PHOSPHORIBOSYLTRANSFERASE"/>
    <property type="match status" value="1"/>
</dbReference>
<dbReference type="PANTHER" id="PTHR32315:SF4">
    <property type="entry name" value="URACIL PHOSPHORIBOSYLTRANSFERASE, CHLOROPLASTIC"/>
    <property type="match status" value="1"/>
</dbReference>
<dbReference type="Pfam" id="PF14681">
    <property type="entry name" value="UPRTase"/>
    <property type="match status" value="1"/>
</dbReference>
<dbReference type="SUPFAM" id="SSF53271">
    <property type="entry name" value="PRTase-like"/>
    <property type="match status" value="1"/>
</dbReference>
<sequence>MRVTVLDHPLVAHKLSVLREKDTPSPVFRQLVEELVTLLAYEATRDVRVEPVTIQTPVAETQGTALTRPRPLVVPILRAGLGMLEGMTHLIPTAEVGFLGMARDDATLDIITYAERLPDDLTGRQVYVLDPMLATGGTLSEAIKFLYRRGAQDITCVCLLAAPEGLDRLEKELGDSEVNVVLASVDERLDENAYIVPGLGDAGDRLYGVVD</sequence>
<evidence type="ECO:0000255" key="1">
    <source>
        <dbReference type="HAMAP-Rule" id="MF_01218"/>
    </source>
</evidence>
<proteinExistence type="inferred from homology"/>
<gene>
    <name evidence="1" type="primary">upp</name>
    <name type="ordered locus">KRH_03210</name>
</gene>
<keyword id="KW-0021">Allosteric enzyme</keyword>
<keyword id="KW-0328">Glycosyltransferase</keyword>
<keyword id="KW-0342">GTP-binding</keyword>
<keyword id="KW-0460">Magnesium</keyword>
<keyword id="KW-0547">Nucleotide-binding</keyword>
<keyword id="KW-1185">Reference proteome</keyword>
<keyword id="KW-0808">Transferase</keyword>
<name>UPP_KOCRD</name>
<organism>
    <name type="scientific">Kocuria rhizophila (strain ATCC 9341 / DSM 348 / NBRC 103217 / DC2201)</name>
    <dbReference type="NCBI Taxonomy" id="378753"/>
    <lineage>
        <taxon>Bacteria</taxon>
        <taxon>Bacillati</taxon>
        <taxon>Actinomycetota</taxon>
        <taxon>Actinomycetes</taxon>
        <taxon>Micrococcales</taxon>
        <taxon>Micrococcaceae</taxon>
        <taxon>Kocuria</taxon>
    </lineage>
</organism>
<protein>
    <recommendedName>
        <fullName evidence="1">Uracil phosphoribosyltransferase</fullName>
        <ecNumber evidence="1">2.4.2.9</ecNumber>
    </recommendedName>
    <alternativeName>
        <fullName evidence="1">UMP pyrophosphorylase</fullName>
    </alternativeName>
    <alternativeName>
        <fullName evidence="1">UPRTase</fullName>
    </alternativeName>
</protein>
<feature type="chain" id="PRO_1000139135" description="Uracil phosphoribosyltransferase">
    <location>
        <begin position="1"/>
        <end position="211"/>
    </location>
</feature>
<feature type="binding site" evidence="1">
    <location>
        <position position="78"/>
    </location>
    <ligand>
        <name>5-phospho-alpha-D-ribose 1-diphosphate</name>
        <dbReference type="ChEBI" id="CHEBI:58017"/>
    </ligand>
</feature>
<feature type="binding site" evidence="1">
    <location>
        <position position="103"/>
    </location>
    <ligand>
        <name>5-phospho-alpha-D-ribose 1-diphosphate</name>
        <dbReference type="ChEBI" id="CHEBI:58017"/>
    </ligand>
</feature>
<feature type="binding site" evidence="1">
    <location>
        <begin position="130"/>
        <end position="138"/>
    </location>
    <ligand>
        <name>5-phospho-alpha-D-ribose 1-diphosphate</name>
        <dbReference type="ChEBI" id="CHEBI:58017"/>
    </ligand>
</feature>
<feature type="binding site" evidence="1">
    <location>
        <position position="195"/>
    </location>
    <ligand>
        <name>uracil</name>
        <dbReference type="ChEBI" id="CHEBI:17568"/>
    </ligand>
</feature>
<feature type="binding site" evidence="1">
    <location>
        <begin position="200"/>
        <end position="202"/>
    </location>
    <ligand>
        <name>uracil</name>
        <dbReference type="ChEBI" id="CHEBI:17568"/>
    </ligand>
</feature>
<feature type="binding site" evidence="1">
    <location>
        <position position="201"/>
    </location>
    <ligand>
        <name>5-phospho-alpha-D-ribose 1-diphosphate</name>
        <dbReference type="ChEBI" id="CHEBI:58017"/>
    </ligand>
</feature>
<reference key="1">
    <citation type="journal article" date="2008" name="J. Bacteriol.">
        <title>Complete genome sequence of the soil actinomycete Kocuria rhizophila.</title>
        <authorList>
            <person name="Takarada H."/>
            <person name="Sekine M."/>
            <person name="Kosugi H."/>
            <person name="Matsuo Y."/>
            <person name="Fujisawa T."/>
            <person name="Omata S."/>
            <person name="Kishi E."/>
            <person name="Shimizu A."/>
            <person name="Tsukatani N."/>
            <person name="Tanikawa S."/>
            <person name="Fujita N."/>
            <person name="Harayama S."/>
        </authorList>
    </citation>
    <scope>NUCLEOTIDE SEQUENCE [LARGE SCALE GENOMIC DNA]</scope>
    <source>
        <strain>ATCC 9341 / DSM 348 / NBRC 103217 / DC2201</strain>
    </source>
</reference>
<comment type="function">
    <text evidence="1">Catalyzes the conversion of uracil and 5-phospho-alpha-D-ribose 1-diphosphate (PRPP) to UMP and diphosphate.</text>
</comment>
<comment type="catalytic activity">
    <reaction evidence="1">
        <text>UMP + diphosphate = 5-phospho-alpha-D-ribose 1-diphosphate + uracil</text>
        <dbReference type="Rhea" id="RHEA:13017"/>
        <dbReference type="ChEBI" id="CHEBI:17568"/>
        <dbReference type="ChEBI" id="CHEBI:33019"/>
        <dbReference type="ChEBI" id="CHEBI:57865"/>
        <dbReference type="ChEBI" id="CHEBI:58017"/>
        <dbReference type="EC" id="2.4.2.9"/>
    </reaction>
</comment>
<comment type="cofactor">
    <cofactor evidence="1">
        <name>Mg(2+)</name>
        <dbReference type="ChEBI" id="CHEBI:18420"/>
    </cofactor>
    <text evidence="1">Binds 1 Mg(2+) ion per subunit. The magnesium is bound as Mg-PRPP.</text>
</comment>
<comment type="activity regulation">
    <text evidence="1">Allosterically activated by GTP.</text>
</comment>
<comment type="pathway">
    <text evidence="1">Pyrimidine metabolism; UMP biosynthesis via salvage pathway; UMP from uracil: step 1/1.</text>
</comment>
<comment type="similarity">
    <text evidence="1">Belongs to the UPRTase family.</text>
</comment>
<accession>B2GFU4</accession>